<organism>
    <name type="scientific">Leptospira borgpetersenii serovar Hardjo-bovis (strain L550)</name>
    <dbReference type="NCBI Taxonomy" id="355276"/>
    <lineage>
        <taxon>Bacteria</taxon>
        <taxon>Pseudomonadati</taxon>
        <taxon>Spirochaetota</taxon>
        <taxon>Spirochaetia</taxon>
        <taxon>Leptospirales</taxon>
        <taxon>Leptospiraceae</taxon>
        <taxon>Leptospira</taxon>
    </lineage>
</organism>
<gene>
    <name evidence="1" type="primary">pheT</name>
    <name type="ordered locus">LBL_2846</name>
</gene>
<reference key="1">
    <citation type="journal article" date="2006" name="Proc. Natl. Acad. Sci. U.S.A.">
        <title>Genome reduction in Leptospira borgpetersenii reflects limited transmission potential.</title>
        <authorList>
            <person name="Bulach D.M."/>
            <person name="Zuerner R.L."/>
            <person name="Wilson P."/>
            <person name="Seemann T."/>
            <person name="McGrath A."/>
            <person name="Cullen P.A."/>
            <person name="Davis J."/>
            <person name="Johnson M."/>
            <person name="Kuczek E."/>
            <person name="Alt D.P."/>
            <person name="Peterson-Burch B."/>
            <person name="Coppel R.L."/>
            <person name="Rood J.I."/>
            <person name="Davies J.K."/>
            <person name="Adler B."/>
        </authorList>
    </citation>
    <scope>NUCLEOTIDE SEQUENCE [LARGE SCALE GENOMIC DNA]</scope>
    <source>
        <strain>L550</strain>
    </source>
</reference>
<dbReference type="EC" id="6.1.1.20" evidence="1"/>
<dbReference type="EMBL" id="CP000348">
    <property type="protein sequence ID" value="ABJ80176.1"/>
    <property type="molecule type" value="Genomic_DNA"/>
</dbReference>
<dbReference type="RefSeq" id="WP_011671094.1">
    <property type="nucleotide sequence ID" value="NC_008508.1"/>
</dbReference>
<dbReference type="SMR" id="Q04XL9"/>
<dbReference type="KEGG" id="lbl:LBL_2846"/>
<dbReference type="HOGENOM" id="CLU_016891_0_0_12"/>
<dbReference type="GO" id="GO:0009328">
    <property type="term" value="C:phenylalanine-tRNA ligase complex"/>
    <property type="evidence" value="ECO:0007669"/>
    <property type="project" value="TreeGrafter"/>
</dbReference>
<dbReference type="GO" id="GO:0005524">
    <property type="term" value="F:ATP binding"/>
    <property type="evidence" value="ECO:0007669"/>
    <property type="project" value="UniProtKB-UniRule"/>
</dbReference>
<dbReference type="GO" id="GO:0000287">
    <property type="term" value="F:magnesium ion binding"/>
    <property type="evidence" value="ECO:0007669"/>
    <property type="project" value="UniProtKB-UniRule"/>
</dbReference>
<dbReference type="GO" id="GO:0004826">
    <property type="term" value="F:phenylalanine-tRNA ligase activity"/>
    <property type="evidence" value="ECO:0007669"/>
    <property type="project" value="UniProtKB-UniRule"/>
</dbReference>
<dbReference type="GO" id="GO:0000049">
    <property type="term" value="F:tRNA binding"/>
    <property type="evidence" value="ECO:0007669"/>
    <property type="project" value="UniProtKB-KW"/>
</dbReference>
<dbReference type="GO" id="GO:0006432">
    <property type="term" value="P:phenylalanyl-tRNA aminoacylation"/>
    <property type="evidence" value="ECO:0007669"/>
    <property type="project" value="UniProtKB-UniRule"/>
</dbReference>
<dbReference type="CDD" id="cd00769">
    <property type="entry name" value="PheRS_beta_core"/>
    <property type="match status" value="1"/>
</dbReference>
<dbReference type="CDD" id="cd02796">
    <property type="entry name" value="tRNA_bind_bactPheRS"/>
    <property type="match status" value="1"/>
</dbReference>
<dbReference type="Gene3D" id="3.30.56.10">
    <property type="match status" value="2"/>
</dbReference>
<dbReference type="Gene3D" id="3.30.930.10">
    <property type="entry name" value="Bira Bifunctional Protein, Domain 2"/>
    <property type="match status" value="1"/>
</dbReference>
<dbReference type="Gene3D" id="3.30.70.380">
    <property type="entry name" value="Ferrodoxin-fold anticodon-binding domain"/>
    <property type="match status" value="1"/>
</dbReference>
<dbReference type="Gene3D" id="2.40.50.140">
    <property type="entry name" value="Nucleic acid-binding proteins"/>
    <property type="match status" value="1"/>
</dbReference>
<dbReference type="Gene3D" id="3.50.40.10">
    <property type="entry name" value="Phenylalanyl-trna Synthetase, Chain B, domain 3"/>
    <property type="match status" value="1"/>
</dbReference>
<dbReference type="HAMAP" id="MF_00283">
    <property type="entry name" value="Phe_tRNA_synth_beta1"/>
    <property type="match status" value="1"/>
</dbReference>
<dbReference type="InterPro" id="IPR045864">
    <property type="entry name" value="aa-tRNA-synth_II/BPL/LPL"/>
</dbReference>
<dbReference type="InterPro" id="IPR005146">
    <property type="entry name" value="B3/B4_tRNA-bd"/>
</dbReference>
<dbReference type="InterPro" id="IPR009061">
    <property type="entry name" value="DNA-bd_dom_put_sf"/>
</dbReference>
<dbReference type="InterPro" id="IPR005121">
    <property type="entry name" value="Fdx_antiC-bd"/>
</dbReference>
<dbReference type="InterPro" id="IPR036690">
    <property type="entry name" value="Fdx_antiC-bd_sf"/>
</dbReference>
<dbReference type="InterPro" id="IPR012340">
    <property type="entry name" value="NA-bd_OB-fold"/>
</dbReference>
<dbReference type="InterPro" id="IPR045060">
    <property type="entry name" value="Phe-tRNA-ligase_IIc_bsu"/>
</dbReference>
<dbReference type="InterPro" id="IPR004532">
    <property type="entry name" value="Phe-tRNA-ligase_IIc_bsu_bact"/>
</dbReference>
<dbReference type="InterPro" id="IPR020825">
    <property type="entry name" value="Phe-tRNA_synthase-like_B3/B4"/>
</dbReference>
<dbReference type="InterPro" id="IPR041616">
    <property type="entry name" value="PheRS_beta_core"/>
</dbReference>
<dbReference type="InterPro" id="IPR002547">
    <property type="entry name" value="tRNA-bd_dom"/>
</dbReference>
<dbReference type="InterPro" id="IPR033714">
    <property type="entry name" value="tRNA_bind_bactPheRS"/>
</dbReference>
<dbReference type="InterPro" id="IPR005147">
    <property type="entry name" value="tRNA_synthase_B5-dom"/>
</dbReference>
<dbReference type="NCBIfam" id="TIGR00472">
    <property type="entry name" value="pheT_bact"/>
    <property type="match status" value="1"/>
</dbReference>
<dbReference type="PANTHER" id="PTHR10947:SF0">
    <property type="entry name" value="PHENYLALANINE--TRNA LIGASE BETA SUBUNIT"/>
    <property type="match status" value="1"/>
</dbReference>
<dbReference type="PANTHER" id="PTHR10947">
    <property type="entry name" value="PHENYLALANYL-TRNA SYNTHETASE BETA CHAIN AND LEUCINE-RICH REPEAT-CONTAINING PROTEIN 47"/>
    <property type="match status" value="1"/>
</dbReference>
<dbReference type="Pfam" id="PF03483">
    <property type="entry name" value="B3_4"/>
    <property type="match status" value="1"/>
</dbReference>
<dbReference type="Pfam" id="PF03484">
    <property type="entry name" value="B5"/>
    <property type="match status" value="1"/>
</dbReference>
<dbReference type="Pfam" id="PF03147">
    <property type="entry name" value="FDX-ACB"/>
    <property type="match status" value="1"/>
</dbReference>
<dbReference type="Pfam" id="PF01588">
    <property type="entry name" value="tRNA_bind"/>
    <property type="match status" value="1"/>
</dbReference>
<dbReference type="Pfam" id="PF17759">
    <property type="entry name" value="tRNA_synthFbeta"/>
    <property type="match status" value="1"/>
</dbReference>
<dbReference type="SMART" id="SM00873">
    <property type="entry name" value="B3_4"/>
    <property type="match status" value="1"/>
</dbReference>
<dbReference type="SMART" id="SM00874">
    <property type="entry name" value="B5"/>
    <property type="match status" value="1"/>
</dbReference>
<dbReference type="SMART" id="SM00896">
    <property type="entry name" value="FDX-ACB"/>
    <property type="match status" value="1"/>
</dbReference>
<dbReference type="SUPFAM" id="SSF54991">
    <property type="entry name" value="Anticodon-binding domain of PheRS"/>
    <property type="match status" value="1"/>
</dbReference>
<dbReference type="SUPFAM" id="SSF55681">
    <property type="entry name" value="Class II aaRS and biotin synthetases"/>
    <property type="match status" value="1"/>
</dbReference>
<dbReference type="SUPFAM" id="SSF50249">
    <property type="entry name" value="Nucleic acid-binding proteins"/>
    <property type="match status" value="1"/>
</dbReference>
<dbReference type="SUPFAM" id="SSF56037">
    <property type="entry name" value="PheT/TilS domain"/>
    <property type="match status" value="1"/>
</dbReference>
<dbReference type="SUPFAM" id="SSF46955">
    <property type="entry name" value="Putative DNA-binding domain"/>
    <property type="match status" value="1"/>
</dbReference>
<dbReference type="PROSITE" id="PS51483">
    <property type="entry name" value="B5"/>
    <property type="match status" value="1"/>
</dbReference>
<dbReference type="PROSITE" id="PS51447">
    <property type="entry name" value="FDX_ACB"/>
    <property type="match status" value="1"/>
</dbReference>
<dbReference type="PROSITE" id="PS50886">
    <property type="entry name" value="TRBD"/>
    <property type="match status" value="1"/>
</dbReference>
<name>SYFB_LEPBL</name>
<keyword id="KW-0030">Aminoacyl-tRNA synthetase</keyword>
<keyword id="KW-0067">ATP-binding</keyword>
<keyword id="KW-0963">Cytoplasm</keyword>
<keyword id="KW-0436">Ligase</keyword>
<keyword id="KW-0460">Magnesium</keyword>
<keyword id="KW-0479">Metal-binding</keyword>
<keyword id="KW-0547">Nucleotide-binding</keyword>
<keyword id="KW-0648">Protein biosynthesis</keyword>
<keyword id="KW-0694">RNA-binding</keyword>
<keyword id="KW-0820">tRNA-binding</keyword>
<feature type="chain" id="PRO_1000078859" description="Phenylalanine--tRNA ligase beta subunit">
    <location>
        <begin position="1"/>
        <end position="802"/>
    </location>
</feature>
<feature type="domain" description="tRNA-binding" evidence="1">
    <location>
        <begin position="40"/>
        <end position="149"/>
    </location>
</feature>
<feature type="domain" description="B5" evidence="1">
    <location>
        <begin position="407"/>
        <end position="484"/>
    </location>
</feature>
<feature type="domain" description="FDX-ACB" evidence="1">
    <location>
        <begin position="710"/>
        <end position="802"/>
    </location>
</feature>
<feature type="binding site" evidence="1">
    <location>
        <position position="462"/>
    </location>
    <ligand>
        <name>Mg(2+)</name>
        <dbReference type="ChEBI" id="CHEBI:18420"/>
        <note>shared with alpha subunit</note>
    </ligand>
</feature>
<feature type="binding site" evidence="1">
    <location>
        <position position="468"/>
    </location>
    <ligand>
        <name>Mg(2+)</name>
        <dbReference type="ChEBI" id="CHEBI:18420"/>
        <note>shared with alpha subunit</note>
    </ligand>
</feature>
<feature type="binding site" evidence="1">
    <location>
        <position position="471"/>
    </location>
    <ligand>
        <name>Mg(2+)</name>
        <dbReference type="ChEBI" id="CHEBI:18420"/>
        <note>shared with alpha subunit</note>
    </ligand>
</feature>
<feature type="binding site" evidence="1">
    <location>
        <position position="472"/>
    </location>
    <ligand>
        <name>Mg(2+)</name>
        <dbReference type="ChEBI" id="CHEBI:18420"/>
        <note>shared with alpha subunit</note>
    </ligand>
</feature>
<proteinExistence type="inferred from homology"/>
<accession>Q04XL9</accession>
<protein>
    <recommendedName>
        <fullName evidence="1">Phenylalanine--tRNA ligase beta subunit</fullName>
        <ecNumber evidence="1">6.1.1.20</ecNumber>
    </recommendedName>
    <alternativeName>
        <fullName evidence="1">Phenylalanyl-tRNA synthetase beta subunit</fullName>
        <shortName evidence="1">PheRS</shortName>
    </alternativeName>
</protein>
<comment type="catalytic activity">
    <reaction evidence="1">
        <text>tRNA(Phe) + L-phenylalanine + ATP = L-phenylalanyl-tRNA(Phe) + AMP + diphosphate + H(+)</text>
        <dbReference type="Rhea" id="RHEA:19413"/>
        <dbReference type="Rhea" id="RHEA-COMP:9668"/>
        <dbReference type="Rhea" id="RHEA-COMP:9699"/>
        <dbReference type="ChEBI" id="CHEBI:15378"/>
        <dbReference type="ChEBI" id="CHEBI:30616"/>
        <dbReference type="ChEBI" id="CHEBI:33019"/>
        <dbReference type="ChEBI" id="CHEBI:58095"/>
        <dbReference type="ChEBI" id="CHEBI:78442"/>
        <dbReference type="ChEBI" id="CHEBI:78531"/>
        <dbReference type="ChEBI" id="CHEBI:456215"/>
        <dbReference type="EC" id="6.1.1.20"/>
    </reaction>
</comment>
<comment type="cofactor">
    <cofactor evidence="1">
        <name>Mg(2+)</name>
        <dbReference type="ChEBI" id="CHEBI:18420"/>
    </cofactor>
    <text evidence="1">Binds 2 magnesium ions per tetramer.</text>
</comment>
<comment type="subunit">
    <text evidence="1">Tetramer of two alpha and two beta subunits.</text>
</comment>
<comment type="subcellular location">
    <subcellularLocation>
        <location evidence="1">Cytoplasm</location>
    </subcellularLocation>
</comment>
<comment type="similarity">
    <text evidence="1">Belongs to the phenylalanyl-tRNA synthetase beta subunit family. Type 1 subfamily.</text>
</comment>
<evidence type="ECO:0000255" key="1">
    <source>
        <dbReference type="HAMAP-Rule" id="MF_00283"/>
    </source>
</evidence>
<sequence>MKLSLDWMNDFTPLKEVGLDVILKKIAVSVCEIDGVVPFRPELDFVKIVRIESLDKHPSADKLQIAEVFDGSSKSQIVTGATNVKVGDLVPLAIPGAKLGDREILESELRGVKSSGMFCSEKELSLSEESSGVWILNGIEGAEIGKTIRSFLYYEDIIFEIDNKSITHRPDLWSHFGFARELASQLRLPITFNPFESLWNFDLSMKLPRVLENQNAHSYYASSICEVFVIPSKRKFQSRLQKCGIRVINNVVDVSNYVMLEMGQPTHFFDKRFLESQGGVSLEVSYAKKGESFALLDETSPSLEEEILLIRNQGRPVAVAGVMGGKESAVQNNTTEIVMESAVFAREKIRKSIRSTGIRSDSSVRYEKGLEATTTLPVIRRALNLLKENGCPSLKASEPVGFLHTPHKEVRIHTDIHFINTKLGITLSQGDITDILERLHFMVSWKGDRLEALVPKFRHNYDVTIPEDLVEEIGRTRGYDTIQVTPLLAEIKTPIRNLSRELERKCKTFFSVGLGYHEVYNYSFQALKENELDGDVELSVKIRNEMPEEQSVLRNSLISSLLKNIRTNQDRFSEIKIFEFGRAYFNIPEPDNEKKFFSFAVSFDRKSSESDLGLLEDDFLKVRKEIESFLKYIRIFEYFWDIKPEIFFHPGASLSLIVDSKQIGNLGYVHPAVLDSFELKKRVIYGSLEFEKLVEIWNTNRNISRFNVPSQFPEAEIDISILIGEKENTNLFTDLVRREKIPELQEGWVYSQFAGGSVPVGKRSVSYRFRLVNYEKTFTQERIKEISDHLVALAGKNGFVLR</sequence>